<accession>A6Q496</accession>
<reference key="1">
    <citation type="journal article" date="2007" name="Proc. Natl. Acad. Sci. U.S.A.">
        <title>Deep-sea vent epsilon-proteobacterial genomes provide insights into emergence of pathogens.</title>
        <authorList>
            <person name="Nakagawa S."/>
            <person name="Takaki Y."/>
            <person name="Shimamura S."/>
            <person name="Reysenbach A.-L."/>
            <person name="Takai K."/>
            <person name="Horikoshi K."/>
        </authorList>
    </citation>
    <scope>NUCLEOTIDE SEQUENCE [LARGE SCALE GENOMIC DNA]</scope>
    <source>
        <strain>SB155-2</strain>
    </source>
</reference>
<gene>
    <name evidence="1" type="primary">rlmH</name>
    <name type="ordered locus">NIS_1196</name>
</gene>
<sequence>MHRIAIYSIGKKDEKCYEAIYEDLIKNSKKFALIETKNVFNKKINAAQSDAQKAMKAYSDTFKPFILSDGFNIALDPEGKCLDSFAFANLLKEHTKLAFFIGGAYGLERSFVQSCDMALSLSPLTMSHKIAKMVLLEQLFRGLSIIHNHPYHK</sequence>
<comment type="function">
    <text evidence="1">Specifically methylates the pseudouridine at position 1915 (m3Psi1915) in 23S rRNA.</text>
</comment>
<comment type="catalytic activity">
    <reaction evidence="1">
        <text>pseudouridine(1915) in 23S rRNA + S-adenosyl-L-methionine = N(3)-methylpseudouridine(1915) in 23S rRNA + S-adenosyl-L-homocysteine + H(+)</text>
        <dbReference type="Rhea" id="RHEA:42752"/>
        <dbReference type="Rhea" id="RHEA-COMP:10221"/>
        <dbReference type="Rhea" id="RHEA-COMP:10222"/>
        <dbReference type="ChEBI" id="CHEBI:15378"/>
        <dbReference type="ChEBI" id="CHEBI:57856"/>
        <dbReference type="ChEBI" id="CHEBI:59789"/>
        <dbReference type="ChEBI" id="CHEBI:65314"/>
        <dbReference type="ChEBI" id="CHEBI:74486"/>
        <dbReference type="EC" id="2.1.1.177"/>
    </reaction>
</comment>
<comment type="subunit">
    <text evidence="1">Homodimer.</text>
</comment>
<comment type="subcellular location">
    <subcellularLocation>
        <location evidence="1">Cytoplasm</location>
    </subcellularLocation>
</comment>
<comment type="similarity">
    <text evidence="1">Belongs to the RNA methyltransferase RlmH family.</text>
</comment>
<name>RLMH_NITSB</name>
<protein>
    <recommendedName>
        <fullName evidence="1">Ribosomal RNA large subunit methyltransferase H</fullName>
        <ecNumber evidence="1">2.1.1.177</ecNumber>
    </recommendedName>
    <alternativeName>
        <fullName evidence="1">23S rRNA (pseudouridine1915-N3)-methyltransferase</fullName>
    </alternativeName>
    <alternativeName>
        <fullName evidence="1">23S rRNA m3Psi1915 methyltransferase</fullName>
    </alternativeName>
    <alternativeName>
        <fullName evidence="1">rRNA (pseudouridine-N3-)-methyltransferase RlmH</fullName>
    </alternativeName>
</protein>
<organism>
    <name type="scientific">Nitratiruptor sp. (strain SB155-2)</name>
    <dbReference type="NCBI Taxonomy" id="387092"/>
    <lineage>
        <taxon>Bacteria</taxon>
        <taxon>Pseudomonadati</taxon>
        <taxon>Campylobacterota</taxon>
        <taxon>Epsilonproteobacteria</taxon>
        <taxon>Nautiliales</taxon>
        <taxon>Nitratiruptoraceae</taxon>
        <taxon>Nitratiruptor</taxon>
    </lineage>
</organism>
<proteinExistence type="inferred from homology"/>
<evidence type="ECO:0000255" key="1">
    <source>
        <dbReference type="HAMAP-Rule" id="MF_00658"/>
    </source>
</evidence>
<dbReference type="EC" id="2.1.1.177" evidence="1"/>
<dbReference type="EMBL" id="AP009178">
    <property type="protein sequence ID" value="BAF70305.1"/>
    <property type="molecule type" value="Genomic_DNA"/>
</dbReference>
<dbReference type="RefSeq" id="WP_012082568.1">
    <property type="nucleotide sequence ID" value="NC_009662.1"/>
</dbReference>
<dbReference type="SMR" id="A6Q496"/>
<dbReference type="FunCoup" id="A6Q496">
    <property type="interactions" value="308"/>
</dbReference>
<dbReference type="STRING" id="387092.NIS_1196"/>
<dbReference type="KEGG" id="nis:NIS_1196"/>
<dbReference type="eggNOG" id="COG1576">
    <property type="taxonomic scope" value="Bacteria"/>
</dbReference>
<dbReference type="HOGENOM" id="CLU_100552_2_1_7"/>
<dbReference type="InParanoid" id="A6Q496"/>
<dbReference type="OrthoDB" id="9806643at2"/>
<dbReference type="Proteomes" id="UP000001118">
    <property type="component" value="Chromosome"/>
</dbReference>
<dbReference type="GO" id="GO:0005737">
    <property type="term" value="C:cytoplasm"/>
    <property type="evidence" value="ECO:0007669"/>
    <property type="project" value="UniProtKB-SubCell"/>
</dbReference>
<dbReference type="GO" id="GO:0070038">
    <property type="term" value="F:rRNA (pseudouridine-N3-)-methyltransferase activity"/>
    <property type="evidence" value="ECO:0007669"/>
    <property type="project" value="UniProtKB-UniRule"/>
</dbReference>
<dbReference type="CDD" id="cd18081">
    <property type="entry name" value="RlmH-like"/>
    <property type="match status" value="1"/>
</dbReference>
<dbReference type="Gene3D" id="3.40.1280.10">
    <property type="match status" value="1"/>
</dbReference>
<dbReference type="HAMAP" id="MF_00658">
    <property type="entry name" value="23SrRNA_methyltr_H"/>
    <property type="match status" value="1"/>
</dbReference>
<dbReference type="InterPro" id="IPR029028">
    <property type="entry name" value="Alpha/beta_knot_MTases"/>
</dbReference>
<dbReference type="InterPro" id="IPR003742">
    <property type="entry name" value="RlmH-like"/>
</dbReference>
<dbReference type="InterPro" id="IPR029026">
    <property type="entry name" value="tRNA_m1G_MTases_N"/>
</dbReference>
<dbReference type="PANTHER" id="PTHR33603">
    <property type="entry name" value="METHYLTRANSFERASE"/>
    <property type="match status" value="1"/>
</dbReference>
<dbReference type="PANTHER" id="PTHR33603:SF1">
    <property type="entry name" value="RIBOSOMAL RNA LARGE SUBUNIT METHYLTRANSFERASE H"/>
    <property type="match status" value="1"/>
</dbReference>
<dbReference type="Pfam" id="PF02590">
    <property type="entry name" value="SPOUT_MTase"/>
    <property type="match status" value="1"/>
</dbReference>
<dbReference type="PIRSF" id="PIRSF004505">
    <property type="entry name" value="MT_bac"/>
    <property type="match status" value="1"/>
</dbReference>
<dbReference type="SUPFAM" id="SSF75217">
    <property type="entry name" value="alpha/beta knot"/>
    <property type="match status" value="1"/>
</dbReference>
<feature type="chain" id="PRO_0000366629" description="Ribosomal RNA large subunit methyltransferase H">
    <location>
        <begin position="1"/>
        <end position="153"/>
    </location>
</feature>
<feature type="binding site" evidence="1">
    <location>
        <position position="75"/>
    </location>
    <ligand>
        <name>S-adenosyl-L-methionine</name>
        <dbReference type="ChEBI" id="CHEBI:59789"/>
    </ligand>
</feature>
<feature type="binding site" evidence="1">
    <location>
        <position position="102"/>
    </location>
    <ligand>
        <name>S-adenosyl-L-methionine</name>
        <dbReference type="ChEBI" id="CHEBI:59789"/>
    </ligand>
</feature>
<feature type="binding site" evidence="1">
    <location>
        <begin position="121"/>
        <end position="126"/>
    </location>
    <ligand>
        <name>S-adenosyl-L-methionine</name>
        <dbReference type="ChEBI" id="CHEBI:59789"/>
    </ligand>
</feature>
<keyword id="KW-0963">Cytoplasm</keyword>
<keyword id="KW-0489">Methyltransferase</keyword>
<keyword id="KW-1185">Reference proteome</keyword>
<keyword id="KW-0698">rRNA processing</keyword>
<keyword id="KW-0949">S-adenosyl-L-methionine</keyword>
<keyword id="KW-0808">Transferase</keyword>